<evidence type="ECO:0000255" key="1">
    <source>
        <dbReference type="HAMAP-Rule" id="MF_00783"/>
    </source>
</evidence>
<gene>
    <name evidence="1" type="primary">flbT</name>
    <name type="ordered locus">Caul_2889</name>
</gene>
<protein>
    <recommendedName>
        <fullName evidence="1">Probable flagellum biosynthesis repressor protein FlbT</fullName>
    </recommendedName>
</protein>
<accession>B0SZU3</accession>
<organism>
    <name type="scientific">Caulobacter sp. (strain K31)</name>
    <dbReference type="NCBI Taxonomy" id="366602"/>
    <lineage>
        <taxon>Bacteria</taxon>
        <taxon>Pseudomonadati</taxon>
        <taxon>Pseudomonadota</taxon>
        <taxon>Alphaproteobacteria</taxon>
        <taxon>Caulobacterales</taxon>
        <taxon>Caulobacteraceae</taxon>
        <taxon>Caulobacter</taxon>
    </lineage>
</organism>
<keyword id="KW-1005">Bacterial flagellum biogenesis</keyword>
<keyword id="KW-0678">Repressor</keyword>
<keyword id="KW-0694">RNA-binding</keyword>
<dbReference type="EMBL" id="CP000927">
    <property type="protein sequence ID" value="ABZ72016.1"/>
    <property type="molecule type" value="Genomic_DNA"/>
</dbReference>
<dbReference type="SMR" id="B0SZU3"/>
<dbReference type="STRING" id="366602.Caul_2889"/>
<dbReference type="KEGG" id="cak:Caul_2889"/>
<dbReference type="eggNOG" id="COG5443">
    <property type="taxonomic scope" value="Bacteria"/>
</dbReference>
<dbReference type="HOGENOM" id="CLU_130913_0_0_5"/>
<dbReference type="OrthoDB" id="8561314at2"/>
<dbReference type="GO" id="GO:0048027">
    <property type="term" value="F:mRNA 5'-UTR binding"/>
    <property type="evidence" value="ECO:0007669"/>
    <property type="project" value="UniProtKB-UniRule"/>
</dbReference>
<dbReference type="GO" id="GO:0044781">
    <property type="term" value="P:bacterial-type flagellum organization"/>
    <property type="evidence" value="ECO:0007669"/>
    <property type="project" value="UniProtKB-KW"/>
</dbReference>
<dbReference type="GO" id="GO:0006402">
    <property type="term" value="P:mRNA catabolic process"/>
    <property type="evidence" value="ECO:0007669"/>
    <property type="project" value="InterPro"/>
</dbReference>
<dbReference type="GO" id="GO:1902209">
    <property type="term" value="P:negative regulation of bacterial-type flagellum assembly"/>
    <property type="evidence" value="ECO:0007669"/>
    <property type="project" value="UniProtKB-UniRule"/>
</dbReference>
<dbReference type="HAMAP" id="MF_00783">
    <property type="entry name" value="FlbT"/>
    <property type="match status" value="1"/>
</dbReference>
<dbReference type="InterPro" id="IPR009967">
    <property type="entry name" value="Flagellum_FlbT"/>
</dbReference>
<dbReference type="NCBIfam" id="NF001995">
    <property type="entry name" value="PRK00794.1-1"/>
    <property type="match status" value="1"/>
</dbReference>
<dbReference type="Pfam" id="PF07378">
    <property type="entry name" value="FlbT"/>
    <property type="match status" value="1"/>
</dbReference>
<dbReference type="PIRSF" id="PIRSF009533">
    <property type="entry name" value="FlbT"/>
    <property type="match status" value="1"/>
</dbReference>
<feature type="chain" id="PRO_1000083584" description="Probable flagellum biosynthesis repressor protein FlbT">
    <location>
        <begin position="1"/>
        <end position="131"/>
    </location>
</feature>
<comment type="function">
    <text evidence="1">Has a post-transcriptional repressor function in flagellum biogenesis. Associates with the 5'-UTR of fljK mRNA and promotes its degradation.</text>
</comment>
<comment type="similarity">
    <text evidence="1">Belongs to the FlbT family.</text>
</comment>
<reference key="1">
    <citation type="submission" date="2008-01" db="EMBL/GenBank/DDBJ databases">
        <title>Complete sequence of chromosome of Caulobacter sp. K31.</title>
        <authorList>
            <consortium name="US DOE Joint Genome Institute"/>
            <person name="Copeland A."/>
            <person name="Lucas S."/>
            <person name="Lapidus A."/>
            <person name="Barry K."/>
            <person name="Glavina del Rio T."/>
            <person name="Dalin E."/>
            <person name="Tice H."/>
            <person name="Pitluck S."/>
            <person name="Bruce D."/>
            <person name="Goodwin L."/>
            <person name="Thompson L.S."/>
            <person name="Brettin T."/>
            <person name="Detter J.C."/>
            <person name="Han C."/>
            <person name="Schmutz J."/>
            <person name="Larimer F."/>
            <person name="Land M."/>
            <person name="Hauser L."/>
            <person name="Kyrpides N."/>
            <person name="Kim E."/>
            <person name="Stephens C."/>
            <person name="Richardson P."/>
        </authorList>
    </citation>
    <scope>NUCLEOTIDE SEQUENCE [LARGE SCALE GENOMIC DNA]</scope>
    <source>
        <strain>K31</strain>
    </source>
</reference>
<proteinExistence type="inferred from homology"/>
<name>FLBT_CAUSK</name>
<sequence>MPLKLSLKPGEKFVLNGAVVQNGDRRGVLVLQNKASVLREKDIMQLDEATTPARRIYFPVMMMYLDEANAERQYEEFATRLTEFMGVVRNPDVLTDCIAISKHVMAREHYKALMLSRKLIEYEDQRLGHVS</sequence>